<sequence>MPQKDPCQKQACEIQKCLQANSYMESKCQAVIQELRKCCAQYPKGRSVVCSGFEKEEEENLTRKSASK</sequence>
<proteinExistence type="evidence at protein level"/>
<dbReference type="EMBL" id="Z24459">
    <property type="protein sequence ID" value="CAA80829.1"/>
    <property type="molecule type" value="Genomic_DNA"/>
</dbReference>
<dbReference type="EMBL" id="BT006749">
    <property type="protein sequence ID" value="AAP35395.1"/>
    <property type="molecule type" value="mRNA"/>
</dbReference>
<dbReference type="EMBL" id="BX470111">
    <property type="status" value="NOT_ANNOTATED_CDS"/>
    <property type="molecule type" value="Genomic_DNA"/>
</dbReference>
<dbReference type="EMBL" id="CH471172">
    <property type="protein sequence ID" value="EAW72639.1"/>
    <property type="molecule type" value="Genomic_DNA"/>
</dbReference>
<dbReference type="EMBL" id="BC002600">
    <property type="protein sequence ID" value="AAH02600.1"/>
    <property type="molecule type" value="mRNA"/>
</dbReference>
<dbReference type="CCDS" id="CCDS14764.1">
    <molecule id="P56277-1"/>
</dbReference>
<dbReference type="PIR" id="S70751">
    <property type="entry name" value="S70751"/>
</dbReference>
<dbReference type="RefSeq" id="NP_001018024.1">
    <molecule id="P56277-1"/>
    <property type="nucleotide sequence ID" value="NM_001018024.3"/>
</dbReference>
<dbReference type="PDB" id="1EI0">
    <property type="method" value="NMR"/>
    <property type="chains" value="A=5-42"/>
</dbReference>
<dbReference type="PDB" id="1HP8">
    <property type="method" value="NMR"/>
    <property type="chains" value="A=1-68"/>
</dbReference>
<dbReference type="PDB" id="2HP8">
    <property type="method" value="NMR"/>
    <property type="chains" value="A=1-68"/>
</dbReference>
<dbReference type="PDBsum" id="1EI0"/>
<dbReference type="PDBsum" id="1HP8"/>
<dbReference type="PDBsum" id="2HP8"/>
<dbReference type="SMR" id="P56277"/>
<dbReference type="BioGRID" id="938528">
    <property type="interactions" value="6"/>
</dbReference>
<dbReference type="FunCoup" id="P56277">
    <property type="interactions" value="295"/>
</dbReference>
<dbReference type="IntAct" id="P56277">
    <property type="interactions" value="6"/>
</dbReference>
<dbReference type="STRING" id="9606.ENSP00000358496"/>
<dbReference type="iPTMnet" id="P56277"/>
<dbReference type="PhosphoSitePlus" id="P56277"/>
<dbReference type="BioMuta" id="CMC4"/>
<dbReference type="DMDM" id="3024174"/>
<dbReference type="jPOST" id="P56277"/>
<dbReference type="MassIVE" id="P56277"/>
<dbReference type="PaxDb" id="9606-ENSP00000358496"/>
<dbReference type="PeptideAtlas" id="P56277"/>
<dbReference type="ProteomicsDB" id="56908">
    <molecule id="P56277-1"/>
</dbReference>
<dbReference type="Pumba" id="P56277"/>
<dbReference type="Antibodypedia" id="45442">
    <property type="antibodies" value="64 antibodies from 17 providers"/>
</dbReference>
<dbReference type="DNASU" id="100272147"/>
<dbReference type="Ensembl" id="ENST00000369479.1">
    <molecule id="P56277-1"/>
    <property type="protein sequence ID" value="ENSP00000358491.1"/>
    <property type="gene ID" value="ENSG00000182712.16"/>
</dbReference>
<dbReference type="Ensembl" id="ENST00000369484.8">
    <molecule id="P56277-1"/>
    <property type="protein sequence ID" value="ENSP00000358496.3"/>
    <property type="gene ID" value="ENSG00000182712.16"/>
</dbReference>
<dbReference type="GeneID" id="100272147"/>
<dbReference type="KEGG" id="hsa:100272147"/>
<dbReference type="MANE-Select" id="ENST00000369484.8">
    <property type="protein sequence ID" value="ENSP00000358496.3"/>
    <property type="RefSeq nucleotide sequence ID" value="NM_001018024.3"/>
    <property type="RefSeq protein sequence ID" value="NP_001018024.1"/>
</dbReference>
<dbReference type="UCSC" id="uc004fmy.4">
    <molecule id="P56277-1"/>
    <property type="organism name" value="human"/>
</dbReference>
<dbReference type="AGR" id="HGNC:35428"/>
<dbReference type="CTD" id="100272147"/>
<dbReference type="DisGeNET" id="100272147"/>
<dbReference type="GeneCards" id="CMC4"/>
<dbReference type="HGNC" id="HGNC:35428">
    <property type="gene designation" value="CMC4"/>
</dbReference>
<dbReference type="HPA" id="ENSG00000182712">
    <property type="expression patterns" value="Low tissue specificity"/>
</dbReference>
<dbReference type="MIM" id="301088">
    <property type="type" value="gene"/>
</dbReference>
<dbReference type="neXtProt" id="NX_P56277"/>
<dbReference type="OpenTargets" id="ENSG00000182712"/>
<dbReference type="PharmGKB" id="PA164723191"/>
<dbReference type="VEuPathDB" id="HostDB:ENSG00000182712"/>
<dbReference type="eggNOG" id="ENOG502SC73">
    <property type="taxonomic scope" value="Eukaryota"/>
</dbReference>
<dbReference type="GeneTree" id="ENSGT00390000012647"/>
<dbReference type="HOGENOM" id="CLU_177210_1_1_1"/>
<dbReference type="InParanoid" id="P56277"/>
<dbReference type="OMA" id="QANKYME"/>
<dbReference type="OrthoDB" id="13601at2759"/>
<dbReference type="PAN-GO" id="P56277">
    <property type="GO annotations" value="1 GO annotation based on evolutionary models"/>
</dbReference>
<dbReference type="PhylomeDB" id="P56277"/>
<dbReference type="TreeFam" id="TF353119"/>
<dbReference type="PathwayCommons" id="P56277"/>
<dbReference type="Reactome" id="R-HSA-1268020">
    <property type="pathway name" value="Mitochondrial protein import"/>
</dbReference>
<dbReference type="SignaLink" id="P56277"/>
<dbReference type="BioGRID-ORCS" id="100272147">
    <property type="hits" value="11 hits in 740 CRISPR screens"/>
</dbReference>
<dbReference type="ChiTaRS" id="CMC4">
    <property type="organism name" value="human"/>
</dbReference>
<dbReference type="EvolutionaryTrace" id="P56277"/>
<dbReference type="GenomeRNAi" id="100272147"/>
<dbReference type="Pharos" id="P56277">
    <property type="development level" value="Tbio"/>
</dbReference>
<dbReference type="PRO" id="PR:P56277"/>
<dbReference type="Proteomes" id="UP000005640">
    <property type="component" value="Chromosome X"/>
</dbReference>
<dbReference type="RNAct" id="P56277">
    <property type="molecule type" value="protein"/>
</dbReference>
<dbReference type="Bgee" id="ENSG00000182712">
    <property type="expression patterns" value="Expressed in right atrium auricular region and 98 other cell types or tissues"/>
</dbReference>
<dbReference type="GO" id="GO:0005758">
    <property type="term" value="C:mitochondrial intermembrane space"/>
    <property type="evidence" value="ECO:0000318"/>
    <property type="project" value="GO_Central"/>
</dbReference>
<dbReference type="GO" id="GO:0005739">
    <property type="term" value="C:mitochondrion"/>
    <property type="evidence" value="ECO:0000314"/>
    <property type="project" value="HPA"/>
</dbReference>
<dbReference type="FunFam" id="1.10.287.1130:FF:000002">
    <property type="entry name" value="cx9C motif-containing protein 4 isoform X2"/>
    <property type="match status" value="1"/>
</dbReference>
<dbReference type="Gene3D" id="1.10.287.1130">
    <property type="entry name" value="CytochromE C oxidase copper chaperone"/>
    <property type="match status" value="1"/>
</dbReference>
<dbReference type="InterPro" id="IPR027179">
    <property type="entry name" value="CMC4"/>
</dbReference>
<dbReference type="InterPro" id="IPR009069">
    <property type="entry name" value="Cys_alpha_HP_mot_SF"/>
</dbReference>
<dbReference type="PANTHER" id="PTHR15590">
    <property type="entry name" value="CX9C MOTIF-CONTAINING PROTEIN 4"/>
    <property type="match status" value="1"/>
</dbReference>
<dbReference type="PANTHER" id="PTHR15590:SF0">
    <property type="entry name" value="CX9C MOTIF-CONTAINING PROTEIN 4"/>
    <property type="match status" value="1"/>
</dbReference>
<dbReference type="Pfam" id="PF08991">
    <property type="entry name" value="CMC4"/>
    <property type="match status" value="1"/>
</dbReference>
<dbReference type="SUPFAM" id="SSF47072">
    <property type="entry name" value="Cysteine alpha-hairpin motif"/>
    <property type="match status" value="1"/>
</dbReference>
<dbReference type="PROSITE" id="PS51808">
    <property type="entry name" value="CHCH"/>
    <property type="match status" value="1"/>
</dbReference>
<feature type="chain" id="PRO_0000096614" description="Cx9C motif-containing protein 4">
    <location>
        <begin position="1"/>
        <end position="68"/>
    </location>
</feature>
<feature type="domain" description="CHCH" evidence="2">
    <location>
        <begin position="4"/>
        <end position="46"/>
    </location>
</feature>
<feature type="short sequence motif" description="Cx9C motif 1" evidence="2">
    <location>
        <begin position="7"/>
        <end position="17"/>
    </location>
</feature>
<feature type="short sequence motif" description="Cx9C motif 2" evidence="2">
    <location>
        <begin position="28"/>
        <end position="38"/>
    </location>
</feature>
<feature type="disulfide bond" evidence="2 5">
    <location>
        <begin position="7"/>
        <end position="38"/>
    </location>
</feature>
<feature type="disulfide bond" evidence="2 5">
    <location>
        <begin position="17"/>
        <end position="28"/>
    </location>
</feature>
<feature type="disulfide bond" evidence="5">
    <location>
        <begin position="39"/>
        <end position="50"/>
    </location>
</feature>
<feature type="helix" evidence="7">
    <location>
        <begin position="8"/>
        <end position="20"/>
    </location>
</feature>
<feature type="turn" evidence="7">
    <location>
        <begin position="21"/>
        <end position="23"/>
    </location>
</feature>
<feature type="helix" evidence="7">
    <location>
        <begin position="25"/>
        <end position="27"/>
    </location>
</feature>
<feature type="helix" evidence="7">
    <location>
        <begin position="29"/>
        <end position="41"/>
    </location>
</feature>
<feature type="helix" evidence="8">
    <location>
        <begin position="44"/>
        <end position="46"/>
    </location>
</feature>
<feature type="helix" evidence="8">
    <location>
        <begin position="48"/>
        <end position="59"/>
    </location>
</feature>
<feature type="turn" evidence="8">
    <location>
        <begin position="60"/>
        <end position="63"/>
    </location>
</feature>
<name>CMC4_HUMAN</name>
<evidence type="ECO:0000250" key="1"/>
<evidence type="ECO:0000255" key="2">
    <source>
        <dbReference type="PROSITE-ProRule" id="PRU01150"/>
    </source>
</evidence>
<evidence type="ECO:0000269" key="3">
    <source>
    </source>
</evidence>
<evidence type="ECO:0000269" key="4">
    <source>
    </source>
</evidence>
<evidence type="ECO:0000269" key="5">
    <source>
    </source>
</evidence>
<evidence type="ECO:0000305" key="6"/>
<evidence type="ECO:0007829" key="7">
    <source>
        <dbReference type="PDB" id="1EI0"/>
    </source>
</evidence>
<evidence type="ECO:0007829" key="8">
    <source>
        <dbReference type="PDB" id="1HP8"/>
    </source>
</evidence>
<protein>
    <recommendedName>
        <fullName>Cx9C motif-containing protein 4</fullName>
    </recommendedName>
    <alternativeName>
        <fullName>Mature T-cell proliferation 1 neighbor protein</fullName>
    </alternativeName>
    <alternativeName>
        <fullName>Mature T-cell proliferation-1 type A</fullName>
        <shortName>MTCP-1 type A</shortName>
    </alternativeName>
    <alternativeName>
        <fullName>Protein p8 MTCP-1</fullName>
        <shortName>p8MTCP1</shortName>
    </alternativeName>
</protein>
<organism>
    <name type="scientific">Homo sapiens</name>
    <name type="common">Human</name>
    <dbReference type="NCBI Taxonomy" id="9606"/>
    <lineage>
        <taxon>Eukaryota</taxon>
        <taxon>Metazoa</taxon>
        <taxon>Chordata</taxon>
        <taxon>Craniata</taxon>
        <taxon>Vertebrata</taxon>
        <taxon>Euteleostomi</taxon>
        <taxon>Mammalia</taxon>
        <taxon>Eutheria</taxon>
        <taxon>Euarchontoglires</taxon>
        <taxon>Primates</taxon>
        <taxon>Haplorrhini</taxon>
        <taxon>Catarrhini</taxon>
        <taxon>Hominidae</taxon>
        <taxon>Homo</taxon>
    </lineage>
</organism>
<keyword id="KW-0002">3D-structure</keyword>
<keyword id="KW-0025">Alternative splicing</keyword>
<keyword id="KW-0160">Chromosomal rearrangement</keyword>
<keyword id="KW-1015">Disulfide bond</keyword>
<keyword id="KW-0496">Mitochondrion</keyword>
<keyword id="KW-1267">Proteomics identification</keyword>
<keyword id="KW-0656">Proto-oncogene</keyword>
<keyword id="KW-1185">Reference proteome</keyword>
<gene>
    <name type="primary">CMC4</name>
    <name type="synonym">C6.1B</name>
    <name type="synonym">MTCP1</name>
    <name type="synonym">MTCP1NB</name>
</gene>
<comment type="subcellular location">
    <subcellularLocation>
        <location evidence="3">Mitochondrion</location>
    </subcellularLocation>
</comment>
<comment type="alternative products">
    <event type="alternative splicing"/>
    <isoform>
        <id>P56277-1</id>
        <name>1</name>
        <name>Short</name>
        <name>Type A</name>
        <name>p8 MTCP1</name>
        <sequence type="displayed"/>
    </isoform>
    <isoform>
        <id>P56278-1</id>
        <name>2</name>
        <name>Long</name>
        <name>Type B1</name>
        <name>p13 MTCP1</name>
        <sequence type="external"/>
    </isoform>
</comment>
<comment type="tissue specificity">
    <text>Expressed in many tissues with a relatively high level in skeletal muscle.</text>
</comment>
<comment type="domain">
    <text evidence="1">The twin Cx9C motifs are involved in the recognition by the mitochondrial disulfide relay system.</text>
</comment>
<comment type="disease">
    <text evidence="4">Overexpressed in T-cell leukemia bearing a t(X;14) translocation.</text>
</comment>
<comment type="miscellaneous">
    <molecule>Isoform 1</molecule>
    <text>Shares a non-coding 5' exon with isoform 2 which is spliced to a different set of 3' exons encoding an unrelated protein.</text>
</comment>
<comment type="similarity">
    <text evidence="6">Belongs to the CMC4 family.</text>
</comment>
<comment type="caution">
    <text evidence="6">MTCP1 and MTCP1NB are transcribed from the same promoter and could be considered the same gene.</text>
</comment>
<comment type="online information" name="Atlas of Genetics and Cytogenetics in Oncology and Haematology">
    <link uri="https://atlasgeneticsoncology.org/gene/89/MTCP1"/>
</comment>
<accession>P56277</accession>
<accession>Q5HYP9</accession>
<reference key="1">
    <citation type="journal article" date="1993" name="Oncogene">
        <title>MTCP-1: a novel gene on the human chromosome Xq28 translocated to the T cell receptor alpha/delta locus in mature T cell proliferations.</title>
        <authorList>
            <person name="Stern M.-H."/>
            <person name="Soulier J."/>
            <person name="Rosenzwajg M."/>
            <person name="Nakahara K."/>
            <person name="Canki-Klain N."/>
            <person name="Aurias A."/>
            <person name="Sigaux F."/>
            <person name="Kirsch I.R."/>
        </authorList>
    </citation>
    <scope>NUCLEOTIDE SEQUENCE [GENOMIC DNA]</scope>
    <scope>ALTERNATIVE SPLICING (ISOFORM 1)</scope>
    <scope>OVEREXPRESSION IN T-CELL</scope>
    <source>
        <tissue>T-cell</tissue>
    </source>
</reference>
<reference key="2">
    <citation type="submission" date="2003-05" db="EMBL/GenBank/DDBJ databases">
        <title>Cloning of human full-length CDSs in BD Creator(TM) system donor vector.</title>
        <authorList>
            <person name="Kalnine N."/>
            <person name="Chen X."/>
            <person name="Rolfs A."/>
            <person name="Halleck A."/>
            <person name="Hines L."/>
            <person name="Eisenstein S."/>
            <person name="Koundinya M."/>
            <person name="Raphael J."/>
            <person name="Moreira D."/>
            <person name="Kelley T."/>
            <person name="LaBaer J."/>
            <person name="Lin Y."/>
            <person name="Phelan M."/>
            <person name="Farmer A."/>
        </authorList>
    </citation>
    <scope>NUCLEOTIDE SEQUENCE [LARGE SCALE MRNA] (ISOFORM 1)</scope>
</reference>
<reference key="3">
    <citation type="journal article" date="2005" name="Nature">
        <title>The DNA sequence of the human X chromosome.</title>
        <authorList>
            <person name="Ross M.T."/>
            <person name="Grafham D.V."/>
            <person name="Coffey A.J."/>
            <person name="Scherer S."/>
            <person name="McLay K."/>
            <person name="Muzny D."/>
            <person name="Platzer M."/>
            <person name="Howell G.R."/>
            <person name="Burrows C."/>
            <person name="Bird C.P."/>
            <person name="Frankish A."/>
            <person name="Lovell F.L."/>
            <person name="Howe K.L."/>
            <person name="Ashurst J.L."/>
            <person name="Fulton R.S."/>
            <person name="Sudbrak R."/>
            <person name="Wen G."/>
            <person name="Jones M.C."/>
            <person name="Hurles M.E."/>
            <person name="Andrews T.D."/>
            <person name="Scott C.E."/>
            <person name="Searle S."/>
            <person name="Ramser J."/>
            <person name="Whittaker A."/>
            <person name="Deadman R."/>
            <person name="Carter N.P."/>
            <person name="Hunt S.E."/>
            <person name="Chen R."/>
            <person name="Cree A."/>
            <person name="Gunaratne P."/>
            <person name="Havlak P."/>
            <person name="Hodgson A."/>
            <person name="Metzker M.L."/>
            <person name="Richards S."/>
            <person name="Scott G."/>
            <person name="Steffen D."/>
            <person name="Sodergren E."/>
            <person name="Wheeler D.A."/>
            <person name="Worley K.C."/>
            <person name="Ainscough R."/>
            <person name="Ambrose K.D."/>
            <person name="Ansari-Lari M.A."/>
            <person name="Aradhya S."/>
            <person name="Ashwell R.I."/>
            <person name="Babbage A.K."/>
            <person name="Bagguley C.L."/>
            <person name="Ballabio A."/>
            <person name="Banerjee R."/>
            <person name="Barker G.E."/>
            <person name="Barlow K.F."/>
            <person name="Barrett I.P."/>
            <person name="Bates K.N."/>
            <person name="Beare D.M."/>
            <person name="Beasley H."/>
            <person name="Beasley O."/>
            <person name="Beck A."/>
            <person name="Bethel G."/>
            <person name="Blechschmidt K."/>
            <person name="Brady N."/>
            <person name="Bray-Allen S."/>
            <person name="Bridgeman A.M."/>
            <person name="Brown A.J."/>
            <person name="Brown M.J."/>
            <person name="Bonnin D."/>
            <person name="Bruford E.A."/>
            <person name="Buhay C."/>
            <person name="Burch P."/>
            <person name="Burford D."/>
            <person name="Burgess J."/>
            <person name="Burrill W."/>
            <person name="Burton J."/>
            <person name="Bye J.M."/>
            <person name="Carder C."/>
            <person name="Carrel L."/>
            <person name="Chako J."/>
            <person name="Chapman J.C."/>
            <person name="Chavez D."/>
            <person name="Chen E."/>
            <person name="Chen G."/>
            <person name="Chen Y."/>
            <person name="Chen Z."/>
            <person name="Chinault C."/>
            <person name="Ciccodicola A."/>
            <person name="Clark S.Y."/>
            <person name="Clarke G."/>
            <person name="Clee C.M."/>
            <person name="Clegg S."/>
            <person name="Clerc-Blankenburg K."/>
            <person name="Clifford K."/>
            <person name="Cobley V."/>
            <person name="Cole C.G."/>
            <person name="Conquer J.S."/>
            <person name="Corby N."/>
            <person name="Connor R.E."/>
            <person name="David R."/>
            <person name="Davies J."/>
            <person name="Davis C."/>
            <person name="Davis J."/>
            <person name="Delgado O."/>
            <person name="Deshazo D."/>
            <person name="Dhami P."/>
            <person name="Ding Y."/>
            <person name="Dinh H."/>
            <person name="Dodsworth S."/>
            <person name="Draper H."/>
            <person name="Dugan-Rocha S."/>
            <person name="Dunham A."/>
            <person name="Dunn M."/>
            <person name="Durbin K.J."/>
            <person name="Dutta I."/>
            <person name="Eades T."/>
            <person name="Ellwood M."/>
            <person name="Emery-Cohen A."/>
            <person name="Errington H."/>
            <person name="Evans K.L."/>
            <person name="Faulkner L."/>
            <person name="Francis F."/>
            <person name="Frankland J."/>
            <person name="Fraser A.E."/>
            <person name="Galgoczy P."/>
            <person name="Gilbert J."/>
            <person name="Gill R."/>
            <person name="Gloeckner G."/>
            <person name="Gregory S.G."/>
            <person name="Gribble S."/>
            <person name="Griffiths C."/>
            <person name="Grocock R."/>
            <person name="Gu Y."/>
            <person name="Gwilliam R."/>
            <person name="Hamilton C."/>
            <person name="Hart E.A."/>
            <person name="Hawes A."/>
            <person name="Heath P.D."/>
            <person name="Heitmann K."/>
            <person name="Hennig S."/>
            <person name="Hernandez J."/>
            <person name="Hinzmann B."/>
            <person name="Ho S."/>
            <person name="Hoffs M."/>
            <person name="Howden P.J."/>
            <person name="Huckle E.J."/>
            <person name="Hume J."/>
            <person name="Hunt P.J."/>
            <person name="Hunt A.R."/>
            <person name="Isherwood J."/>
            <person name="Jacob L."/>
            <person name="Johnson D."/>
            <person name="Jones S."/>
            <person name="de Jong P.J."/>
            <person name="Joseph S.S."/>
            <person name="Keenan S."/>
            <person name="Kelly S."/>
            <person name="Kershaw J.K."/>
            <person name="Khan Z."/>
            <person name="Kioschis P."/>
            <person name="Klages S."/>
            <person name="Knights A.J."/>
            <person name="Kosiura A."/>
            <person name="Kovar-Smith C."/>
            <person name="Laird G.K."/>
            <person name="Langford C."/>
            <person name="Lawlor S."/>
            <person name="Leversha M."/>
            <person name="Lewis L."/>
            <person name="Liu W."/>
            <person name="Lloyd C."/>
            <person name="Lloyd D.M."/>
            <person name="Loulseged H."/>
            <person name="Loveland J.E."/>
            <person name="Lovell J.D."/>
            <person name="Lozado R."/>
            <person name="Lu J."/>
            <person name="Lyne R."/>
            <person name="Ma J."/>
            <person name="Maheshwari M."/>
            <person name="Matthews L.H."/>
            <person name="McDowall J."/>
            <person name="McLaren S."/>
            <person name="McMurray A."/>
            <person name="Meidl P."/>
            <person name="Meitinger T."/>
            <person name="Milne S."/>
            <person name="Miner G."/>
            <person name="Mistry S.L."/>
            <person name="Morgan M."/>
            <person name="Morris S."/>
            <person name="Mueller I."/>
            <person name="Mullikin J.C."/>
            <person name="Nguyen N."/>
            <person name="Nordsiek G."/>
            <person name="Nyakatura G."/>
            <person name="O'dell C.N."/>
            <person name="Okwuonu G."/>
            <person name="Palmer S."/>
            <person name="Pandian R."/>
            <person name="Parker D."/>
            <person name="Parrish J."/>
            <person name="Pasternak S."/>
            <person name="Patel D."/>
            <person name="Pearce A.V."/>
            <person name="Pearson D.M."/>
            <person name="Pelan S.E."/>
            <person name="Perez L."/>
            <person name="Porter K.M."/>
            <person name="Ramsey Y."/>
            <person name="Reichwald K."/>
            <person name="Rhodes S."/>
            <person name="Ridler K.A."/>
            <person name="Schlessinger D."/>
            <person name="Schueler M.G."/>
            <person name="Sehra H.K."/>
            <person name="Shaw-Smith C."/>
            <person name="Shen H."/>
            <person name="Sheridan E.M."/>
            <person name="Shownkeen R."/>
            <person name="Skuce C.D."/>
            <person name="Smith M.L."/>
            <person name="Sotheran E.C."/>
            <person name="Steingruber H.E."/>
            <person name="Steward C.A."/>
            <person name="Storey R."/>
            <person name="Swann R.M."/>
            <person name="Swarbreck D."/>
            <person name="Tabor P.E."/>
            <person name="Taudien S."/>
            <person name="Taylor T."/>
            <person name="Teague B."/>
            <person name="Thomas K."/>
            <person name="Thorpe A."/>
            <person name="Timms K."/>
            <person name="Tracey A."/>
            <person name="Trevanion S."/>
            <person name="Tromans A.C."/>
            <person name="d'Urso M."/>
            <person name="Verduzco D."/>
            <person name="Villasana D."/>
            <person name="Waldron L."/>
            <person name="Wall M."/>
            <person name="Wang Q."/>
            <person name="Warren J."/>
            <person name="Warry G.L."/>
            <person name="Wei X."/>
            <person name="West A."/>
            <person name="Whitehead S.L."/>
            <person name="Whiteley M.N."/>
            <person name="Wilkinson J.E."/>
            <person name="Willey D.L."/>
            <person name="Williams G."/>
            <person name="Williams L."/>
            <person name="Williamson A."/>
            <person name="Williamson H."/>
            <person name="Wilming L."/>
            <person name="Woodmansey R.L."/>
            <person name="Wray P.W."/>
            <person name="Yen J."/>
            <person name="Zhang J."/>
            <person name="Zhou J."/>
            <person name="Zoghbi H."/>
            <person name="Zorilla S."/>
            <person name="Buck D."/>
            <person name="Reinhardt R."/>
            <person name="Poustka A."/>
            <person name="Rosenthal A."/>
            <person name="Lehrach H."/>
            <person name="Meindl A."/>
            <person name="Minx P.J."/>
            <person name="Hillier L.W."/>
            <person name="Willard H.F."/>
            <person name="Wilson R.K."/>
            <person name="Waterston R.H."/>
            <person name="Rice C.M."/>
            <person name="Vaudin M."/>
            <person name="Coulson A."/>
            <person name="Nelson D.L."/>
            <person name="Weinstock G."/>
            <person name="Sulston J.E."/>
            <person name="Durbin R.M."/>
            <person name="Hubbard T."/>
            <person name="Gibbs R.A."/>
            <person name="Beck S."/>
            <person name="Rogers J."/>
            <person name="Bentley D.R."/>
        </authorList>
    </citation>
    <scope>NUCLEOTIDE SEQUENCE [LARGE SCALE GENOMIC DNA]</scope>
</reference>
<reference key="4">
    <citation type="submission" date="2005-09" db="EMBL/GenBank/DDBJ databases">
        <authorList>
            <person name="Mural R.J."/>
            <person name="Istrail S."/>
            <person name="Sutton G.G."/>
            <person name="Florea L."/>
            <person name="Halpern A.L."/>
            <person name="Mobarry C.M."/>
            <person name="Lippert R."/>
            <person name="Walenz B."/>
            <person name="Shatkay H."/>
            <person name="Dew I."/>
            <person name="Miller J.R."/>
            <person name="Flanigan M.J."/>
            <person name="Edwards N.J."/>
            <person name="Bolanos R."/>
            <person name="Fasulo D."/>
            <person name="Halldorsson B.V."/>
            <person name="Hannenhalli S."/>
            <person name="Turner R."/>
            <person name="Yooseph S."/>
            <person name="Lu F."/>
            <person name="Nusskern D.R."/>
            <person name="Shue B.C."/>
            <person name="Zheng X.H."/>
            <person name="Zhong F."/>
            <person name="Delcher A.L."/>
            <person name="Huson D.H."/>
            <person name="Kravitz S.A."/>
            <person name="Mouchard L."/>
            <person name="Reinert K."/>
            <person name="Remington K.A."/>
            <person name="Clark A.G."/>
            <person name="Waterman M.S."/>
            <person name="Eichler E.E."/>
            <person name="Adams M.D."/>
            <person name="Hunkapiller M.W."/>
            <person name="Myers E.W."/>
            <person name="Venter J.C."/>
        </authorList>
    </citation>
    <scope>NUCLEOTIDE SEQUENCE [LARGE SCALE GENOMIC DNA]</scope>
</reference>
<reference key="5">
    <citation type="journal article" date="2004" name="Genome Res.">
        <title>The status, quality, and expansion of the NIH full-length cDNA project: the Mammalian Gene Collection (MGC).</title>
        <authorList>
            <consortium name="The MGC Project Team"/>
        </authorList>
    </citation>
    <scope>NUCLEOTIDE SEQUENCE [LARGE SCALE MRNA] (ISOFORM 1)</scope>
    <source>
        <tissue>Brain</tissue>
    </source>
</reference>
<reference key="6">
    <citation type="journal article" date="1995" name="Oncogene">
        <title>The 8 kD product of the putative oncogene MTCP-1 is a mitochondrial protein.</title>
        <authorList>
            <person name="Madani A."/>
            <person name="Soulier J."/>
            <person name="Schmid M."/>
            <person name="Plichtova R."/>
            <person name="Lerme F."/>
            <person name="Gateau-Roesch O."/>
            <person name="Garnier J.-P."/>
            <person name="Pla M."/>
            <person name="Sigaux F."/>
            <person name="Stern M.-H."/>
        </authorList>
    </citation>
    <scope>SUBCELLULAR LOCATION</scope>
</reference>
<reference key="7">
    <citation type="journal article" date="2014" name="J. Proteomics">
        <title>An enzyme assisted RP-RPLC approach for in-depth analysis of human liver phosphoproteome.</title>
        <authorList>
            <person name="Bian Y."/>
            <person name="Song C."/>
            <person name="Cheng K."/>
            <person name="Dong M."/>
            <person name="Wang F."/>
            <person name="Huang J."/>
            <person name="Sun D."/>
            <person name="Wang L."/>
            <person name="Ye M."/>
            <person name="Zou H."/>
        </authorList>
    </citation>
    <scope>IDENTIFICATION BY MASS SPECTROMETRY [LARGE SCALE ANALYSIS]</scope>
    <source>
        <tissue>Liver</tissue>
    </source>
</reference>
<reference key="8">
    <citation type="journal article" date="1997" name="J. Mol. Biol.">
        <title>Solution structure of human p8MTCP1, a cysteine-rich protein encoded by the MTCP1 oncogene, reveals a new alpha-helical assembly motif.</title>
        <authorList>
            <person name="Barthe P."/>
            <person name="Yang Y.-S."/>
            <person name="Chiche L."/>
            <person name="Hoh F."/>
            <person name="Strub M.-P."/>
            <person name="Guignard L."/>
            <person name="Soulier J."/>
            <person name="Stern M.-H."/>
            <person name="van Tilbeurgh H."/>
            <person name="Lhoste J.-M."/>
            <person name="Roumestand C."/>
        </authorList>
    </citation>
    <scope>STRUCTURE BY NMR</scope>
    <scope>DISULFIDE BONDS</scope>
</reference>